<sequence length="435" mass="50649">MAQTVPPCELPCKEYDVARNTGAYTSSGLATASFRTSKYLLEEWFQNCYARYHQAFADRDQSERQRHESQQLATETQALAQRTQQDSTRTVGERLQDTHSWKSELQREMEALAAETNLLLAQKQRLERALDATEVPFSITTDNLQCRERREHPNLVRDHVETELLKEAELIRNIQELLKRTIMQAVSQIRLNREHKETCEMDWSDKMEAYNIDETCGRHHSQSTEVQAHPYSTTFQESASTPETRAKFTQDNLCRAQRERLASANLRVLVDCILRDTSEDLRLQCDAVNLAFGRRCEELEDARYKLHHHLHKTLREITDQEHNVAALKQAIKDKEAPLHVAQTRLYLRSHRPNMELCRDAAQFRLLSEVEELNMSLTALREKLLEAEQSLRNLEDIHMSLEKDIAAMTNSLFIDRQKCMAHRTRYPTILQLAGYQ</sequence>
<gene>
    <name evidence="10" type="primary">TEKT4</name>
</gene>
<dbReference type="EMBL" id="AC097374">
    <property type="protein sequence ID" value="AAX88873.1"/>
    <property type="molecule type" value="Genomic_DNA"/>
</dbReference>
<dbReference type="EMBL" id="BC021716">
    <property type="protein sequence ID" value="AAH21716.1"/>
    <property type="molecule type" value="mRNA"/>
</dbReference>
<dbReference type="CCDS" id="CCDS2005.1"/>
<dbReference type="RefSeq" id="NP_653306.1">
    <property type="nucleotide sequence ID" value="NM_144705.4"/>
</dbReference>
<dbReference type="PDB" id="7UNG">
    <property type="method" value="EM"/>
    <property type="resolution" value="3.60 A"/>
    <property type="chains" value="D0/D1/D2/D3/D5/D6/D7/D8=1-435"/>
</dbReference>
<dbReference type="PDBsum" id="7UNG"/>
<dbReference type="EMDB" id="EMD-26624"/>
<dbReference type="SMR" id="Q8WW24"/>
<dbReference type="BioGRID" id="127301">
    <property type="interactions" value="122"/>
</dbReference>
<dbReference type="FunCoup" id="Q8WW24">
    <property type="interactions" value="38"/>
</dbReference>
<dbReference type="IntAct" id="Q8WW24">
    <property type="interactions" value="119"/>
</dbReference>
<dbReference type="MINT" id="Q8WW24"/>
<dbReference type="STRING" id="9606.ENSP00000295201"/>
<dbReference type="GlyGen" id="Q8WW24">
    <property type="glycosylation" value="1 site, 1 O-linked glycan (1 site)"/>
</dbReference>
<dbReference type="iPTMnet" id="Q8WW24"/>
<dbReference type="PhosphoSitePlus" id="Q8WW24"/>
<dbReference type="BioMuta" id="TEKT4"/>
<dbReference type="DMDM" id="74730916"/>
<dbReference type="jPOST" id="Q8WW24"/>
<dbReference type="MassIVE" id="Q8WW24"/>
<dbReference type="PaxDb" id="9606-ENSP00000295201"/>
<dbReference type="PeptideAtlas" id="Q8WW24"/>
<dbReference type="ProteomicsDB" id="74851"/>
<dbReference type="Antibodypedia" id="32286">
    <property type="antibodies" value="173 antibodies from 22 providers"/>
</dbReference>
<dbReference type="DNASU" id="150483"/>
<dbReference type="Ensembl" id="ENST00000295201.5">
    <property type="protein sequence ID" value="ENSP00000295201.4"/>
    <property type="gene ID" value="ENSG00000163060.8"/>
</dbReference>
<dbReference type="GeneID" id="150483"/>
<dbReference type="KEGG" id="hsa:150483"/>
<dbReference type="MANE-Select" id="ENST00000295201.5">
    <property type="protein sequence ID" value="ENSP00000295201.4"/>
    <property type="RefSeq nucleotide sequence ID" value="NM_144705.4"/>
    <property type="RefSeq protein sequence ID" value="NP_653306.1"/>
</dbReference>
<dbReference type="UCSC" id="uc002stw.3">
    <property type="organism name" value="human"/>
</dbReference>
<dbReference type="AGR" id="HGNC:31012"/>
<dbReference type="CTD" id="150483"/>
<dbReference type="DisGeNET" id="150483"/>
<dbReference type="GeneCards" id="TEKT4"/>
<dbReference type="HGNC" id="HGNC:31012">
    <property type="gene designation" value="TEKT4"/>
</dbReference>
<dbReference type="HPA" id="ENSG00000163060">
    <property type="expression patterns" value="Tissue enriched (testis)"/>
</dbReference>
<dbReference type="neXtProt" id="NX_Q8WW24"/>
<dbReference type="OpenTargets" id="ENSG00000163060"/>
<dbReference type="PharmGKB" id="PA142670819"/>
<dbReference type="VEuPathDB" id="HostDB:ENSG00000163060"/>
<dbReference type="eggNOG" id="KOG2685">
    <property type="taxonomic scope" value="Eukaryota"/>
</dbReference>
<dbReference type="GeneTree" id="ENSGT00950000182894"/>
<dbReference type="HOGENOM" id="CLU_033588_2_1_1"/>
<dbReference type="InParanoid" id="Q8WW24"/>
<dbReference type="OMA" id="RNLEDTH"/>
<dbReference type="OrthoDB" id="5788000at2759"/>
<dbReference type="PAN-GO" id="Q8WW24">
    <property type="GO annotations" value="4 GO annotations based on evolutionary models"/>
</dbReference>
<dbReference type="PhylomeDB" id="Q8WW24"/>
<dbReference type="TreeFam" id="TF320754"/>
<dbReference type="PathwayCommons" id="Q8WW24"/>
<dbReference type="SignaLink" id="Q8WW24"/>
<dbReference type="BioGRID-ORCS" id="150483">
    <property type="hits" value="52 hits in 1143 CRISPR screens"/>
</dbReference>
<dbReference type="GenomeRNAi" id="150483"/>
<dbReference type="Pharos" id="Q8WW24">
    <property type="development level" value="Tbio"/>
</dbReference>
<dbReference type="PRO" id="PR:Q8WW24"/>
<dbReference type="Proteomes" id="UP000005640">
    <property type="component" value="Chromosome 2"/>
</dbReference>
<dbReference type="RNAct" id="Q8WW24">
    <property type="molecule type" value="protein"/>
</dbReference>
<dbReference type="Bgee" id="ENSG00000163060">
    <property type="expression patterns" value="Expressed in right uterine tube and 85 other cell types or tissues"/>
</dbReference>
<dbReference type="ExpressionAtlas" id="Q8WW24">
    <property type="expression patterns" value="baseline and differential"/>
</dbReference>
<dbReference type="GO" id="GO:0160111">
    <property type="term" value="C:axonemal A tubule inner sheath"/>
    <property type="evidence" value="ECO:0000250"/>
    <property type="project" value="UniProtKB"/>
</dbReference>
<dbReference type="GO" id="GO:0005879">
    <property type="term" value="C:axonemal microtubule"/>
    <property type="evidence" value="ECO:0000314"/>
    <property type="project" value="UniProtKB"/>
</dbReference>
<dbReference type="GO" id="GO:0015630">
    <property type="term" value="C:microtubule cytoskeleton"/>
    <property type="evidence" value="ECO:0000318"/>
    <property type="project" value="GO_Central"/>
</dbReference>
<dbReference type="GO" id="GO:0005634">
    <property type="term" value="C:nucleus"/>
    <property type="evidence" value="ECO:0007005"/>
    <property type="project" value="UniProtKB"/>
</dbReference>
<dbReference type="GO" id="GO:0036126">
    <property type="term" value="C:sperm flagellum"/>
    <property type="evidence" value="ECO:0000250"/>
    <property type="project" value="UniProtKB"/>
</dbReference>
<dbReference type="GO" id="GO:0060271">
    <property type="term" value="P:cilium assembly"/>
    <property type="evidence" value="ECO:0000318"/>
    <property type="project" value="GO_Central"/>
</dbReference>
<dbReference type="GO" id="GO:0060294">
    <property type="term" value="P:cilium movement involved in cell motility"/>
    <property type="evidence" value="ECO:0000318"/>
    <property type="project" value="GO_Central"/>
</dbReference>
<dbReference type="GO" id="GO:0030317">
    <property type="term" value="P:flagellated sperm motility"/>
    <property type="evidence" value="ECO:0000250"/>
    <property type="project" value="UniProtKB"/>
</dbReference>
<dbReference type="InterPro" id="IPR048256">
    <property type="entry name" value="Tektin-like"/>
</dbReference>
<dbReference type="InterPro" id="IPR000435">
    <property type="entry name" value="Tektins"/>
</dbReference>
<dbReference type="PANTHER" id="PTHR19960">
    <property type="entry name" value="TEKTIN"/>
    <property type="match status" value="1"/>
</dbReference>
<dbReference type="PANTHER" id="PTHR19960:SF12">
    <property type="entry name" value="TEKTIN-4"/>
    <property type="match status" value="1"/>
</dbReference>
<dbReference type="Pfam" id="PF03148">
    <property type="entry name" value="Tektin"/>
    <property type="match status" value="1"/>
</dbReference>
<dbReference type="PRINTS" id="PR00511">
    <property type="entry name" value="TEKTIN"/>
</dbReference>
<feature type="chain" id="PRO_0000261161" description="Tektin-4">
    <location>
        <begin position="1"/>
        <end position="435"/>
    </location>
</feature>
<feature type="region of interest" description="Disordered" evidence="5">
    <location>
        <begin position="60"/>
        <end position="96"/>
    </location>
</feature>
<feature type="coiled-coil region" evidence="4">
    <location>
        <begin position="102"/>
        <end position="180"/>
    </location>
</feature>
<feature type="coiled-coil region" evidence="4">
    <location>
        <begin position="310"/>
        <end position="336"/>
    </location>
</feature>
<feature type="coiled-coil region" evidence="4">
    <location>
        <begin position="363"/>
        <end position="411"/>
    </location>
</feature>
<feature type="compositionally biased region" description="Basic and acidic residues" evidence="5">
    <location>
        <begin position="60"/>
        <end position="69"/>
    </location>
</feature>
<feature type="compositionally biased region" description="Low complexity" evidence="5">
    <location>
        <begin position="70"/>
        <end position="85"/>
    </location>
</feature>
<feature type="sequence variant" id="VAR_029085" description="In dbSNP:rs4854235.">
    <original>T</original>
    <variation>M</variation>
    <location>
        <position position="83"/>
    </location>
</feature>
<feature type="sequence variant" id="VAR_062151" description="In dbSNP:rs11164112.">
    <original>S</original>
    <variation>G</variation>
    <location>
        <position position="100"/>
    </location>
</feature>
<feature type="sequence variant" id="VAR_029086" description="In dbSNP:rs17802433.">
    <original>K</original>
    <variation>N</variation>
    <location>
        <position position="102"/>
    </location>
</feature>
<feature type="sequence variant" id="VAR_035941" description="In a breast cancer sample; somatic mutation." evidence="6">
    <original>C</original>
    <variation>S</variation>
    <location>
        <position position="272"/>
    </location>
</feature>
<feature type="sequence variant" id="VAR_029087" description="In dbSNP:rs17120062.">
    <original>N</original>
    <variation>K</variation>
    <location>
        <position position="409"/>
    </location>
</feature>
<accession>Q8WW24</accession>
<keyword id="KW-0002">3D-structure</keyword>
<keyword id="KW-0966">Cell projection</keyword>
<keyword id="KW-0969">Cilium</keyword>
<keyword id="KW-0970">Cilium biogenesis/degradation</keyword>
<keyword id="KW-0175">Coiled coil</keyword>
<keyword id="KW-0963">Cytoplasm</keyword>
<keyword id="KW-0206">Cytoskeleton</keyword>
<keyword id="KW-0282">Flagellum</keyword>
<keyword id="KW-1267">Proteomics identification</keyword>
<keyword id="KW-1185">Reference proteome</keyword>
<keyword id="KW-0832">Ubl conjugation</keyword>
<comment type="function">
    <text evidence="2 3 8">Microtubule inner protein (MIP) part of the dynein-decorated doublet microtubules (DMTs) in cilia and flagellar axoneme (PubMed:36191189). Forms filamentous polymers in the walls of ciliary and flagellar microtubules (By similarity). Contributes to normal sperm motility (By similarity).</text>
</comment>
<comment type="subunit">
    <text evidence="1">Microtubule inner protein component of sperm flagellar doublet microtubules.</text>
</comment>
<comment type="interaction">
    <interactant intactId="EBI-750487">
        <id>Q8WW24</id>
    </interactant>
    <interactant intactId="EBI-12811089">
        <id>Q8NC06-3</id>
        <label>ACBD4</label>
    </interactant>
    <organismsDiffer>false</organismsDiffer>
    <experiments>3</experiments>
</comment>
<comment type="interaction">
    <interactant intactId="EBI-750487">
        <id>Q8WW24</id>
    </interactant>
    <interactant intactId="EBI-8643161">
        <id>Q9NX04</id>
        <label>AIRIM</label>
    </interactant>
    <organismsDiffer>false</organismsDiffer>
    <experiments>3</experiments>
</comment>
<comment type="interaction">
    <interactant intactId="EBI-750487">
        <id>Q8WW24</id>
    </interactant>
    <interactant intactId="EBI-357530">
        <id>Q9ULX6</id>
        <label>AKAP8L</label>
    </interactant>
    <organismsDiffer>false</organismsDiffer>
    <experiments>3</experiments>
</comment>
<comment type="interaction">
    <interactant intactId="EBI-750487">
        <id>Q8WW24</id>
    </interactant>
    <interactant intactId="EBI-3905054">
        <id>P13196</id>
        <label>ALAS1</label>
    </interactant>
    <organismsDiffer>false</organismsDiffer>
    <experiments>6</experiments>
</comment>
<comment type="interaction">
    <interactant intactId="EBI-750487">
        <id>Q8WW24</id>
    </interactant>
    <interactant intactId="EBI-12823597">
        <id>Q9Y4X0-3</id>
        <label>AMMECR1</label>
    </interactant>
    <organismsDiffer>false</organismsDiffer>
    <experiments>3</experiments>
</comment>
<comment type="interaction">
    <interactant intactId="EBI-750487">
        <id>Q8WW24</id>
    </interactant>
    <interactant intactId="EBI-14493093">
        <id>Q3KP44</id>
        <label>ANKRD55</label>
    </interactant>
    <organismsDiffer>false</organismsDiffer>
    <experiments>3</experiments>
</comment>
<comment type="interaction">
    <interactant intactId="EBI-750487">
        <id>Q8WW24</id>
    </interactant>
    <interactant intactId="EBI-948603">
        <id>Q03989</id>
        <label>ARID5A</label>
    </interactant>
    <organismsDiffer>false</organismsDiffer>
    <experiments>3</experiments>
</comment>
<comment type="interaction">
    <interactant intactId="EBI-750487">
        <id>Q8WW24</id>
    </interactant>
    <interactant intactId="EBI-10175276">
        <id>A9UGY9</id>
        <label>ATG5</label>
    </interactant>
    <organismsDiffer>false</organismsDiffer>
    <experiments>3</experiments>
</comment>
<comment type="interaction">
    <interactant intactId="EBI-750487">
        <id>Q8WW24</id>
    </interactant>
    <interactant intactId="EBI-1047414">
        <id>Q9H1Y0</id>
        <label>ATG5</label>
    </interactant>
    <organismsDiffer>false</organismsDiffer>
    <experiments>6</experiments>
</comment>
<comment type="interaction">
    <interactant intactId="EBI-750487">
        <id>Q8WW24</id>
    </interactant>
    <interactant intactId="EBI-765407">
        <id>P41182</id>
        <label>BCL6</label>
    </interactant>
    <organismsDiffer>false</organismsDiffer>
    <experiments>3</experiments>
</comment>
<comment type="interaction">
    <interactant intactId="EBI-750487">
        <id>Q8WW24</id>
    </interactant>
    <interactant intactId="EBI-2548012">
        <id>Q9H2G9</id>
        <label>BLZF1</label>
    </interactant>
    <organismsDiffer>false</organismsDiffer>
    <experiments>3</experiments>
</comment>
<comment type="interaction">
    <interactant intactId="EBI-750487">
        <id>Q8WW24</id>
    </interactant>
    <interactant intactId="EBI-718615">
        <id>Q9H5F2</id>
        <label>CFAP68</label>
    </interactant>
    <organismsDiffer>false</organismsDiffer>
    <experiments>3</experiments>
</comment>
<comment type="interaction">
    <interactant intactId="EBI-750487">
        <id>Q8WW24</id>
    </interactant>
    <interactant intactId="EBI-751587">
        <id>Q9GZU7</id>
        <label>CTDSP1</label>
    </interactant>
    <organismsDiffer>false</organismsDiffer>
    <experiments>3</experiments>
</comment>
<comment type="interaction">
    <interactant intactId="EBI-750487">
        <id>Q8WW24</id>
    </interactant>
    <interactant intactId="EBI-742054">
        <id>Q96D03</id>
        <label>DDIT4L</label>
    </interactant>
    <organismsDiffer>false</organismsDiffer>
    <experiments>3</experiments>
</comment>
<comment type="interaction">
    <interactant intactId="EBI-750487">
        <id>Q8WW24</id>
    </interactant>
    <interactant intactId="EBI-2349927">
        <id>Q5JST6</id>
        <label>EFHC2</label>
    </interactant>
    <organismsDiffer>false</organismsDiffer>
    <experiments>3</experiments>
</comment>
<comment type="interaction">
    <interactant intactId="EBI-750487">
        <id>Q8WW24</id>
    </interactant>
    <interactant intactId="EBI-12807776">
        <id>O00167-2</id>
        <label>EYA2</label>
    </interactant>
    <organismsDiffer>false</organismsDiffer>
    <experiments>3</experiments>
</comment>
<comment type="interaction">
    <interactant intactId="EBI-750487">
        <id>Q8WW24</id>
    </interactant>
    <interactant intactId="EBI-12871772">
        <id>Q7Z4H9</id>
        <label>FAM220A</label>
    </interactant>
    <organismsDiffer>false</organismsDiffer>
    <experiments>3</experiments>
</comment>
<comment type="interaction">
    <interactant intactId="EBI-750487">
        <id>Q8WW24</id>
    </interactant>
    <interactant intactId="EBI-9090198">
        <id>P15976-2</id>
        <label>GATA1</label>
    </interactant>
    <organismsDiffer>false</organismsDiffer>
    <experiments>5</experiments>
</comment>
<comment type="interaction">
    <interactant intactId="EBI-750487">
        <id>Q8WW24</id>
    </interactant>
    <interactant intactId="EBI-10261098">
        <id>Q86YR5-3</id>
        <label>GPSM1</label>
    </interactant>
    <organismsDiffer>false</organismsDiffer>
    <experiments>3</experiments>
</comment>
<comment type="interaction">
    <interactant intactId="EBI-750487">
        <id>Q8WW24</id>
    </interactant>
    <interactant intactId="EBI-12353035">
        <id>Q13322-4</id>
        <label>GRB10</label>
    </interactant>
    <organismsDiffer>false</organismsDiffer>
    <experiments>3</experiments>
</comment>
<comment type="interaction">
    <interactant intactId="EBI-750487">
        <id>Q8WW24</id>
    </interactant>
    <interactant intactId="EBI-372619">
        <id>Q14687</id>
        <label>GSE1</label>
    </interactant>
    <organismsDiffer>false</organismsDiffer>
    <experiments>5</experiments>
</comment>
<comment type="interaction">
    <interactant intactId="EBI-750487">
        <id>Q8WW24</id>
    </interactant>
    <interactant intactId="EBI-9834454">
        <id>P08631-2</id>
        <label>HCK</label>
    </interactant>
    <organismsDiffer>false</organismsDiffer>
    <experiments>3</experiments>
</comment>
<comment type="interaction">
    <interactant intactId="EBI-750487">
        <id>Q8WW24</id>
    </interactant>
    <interactant intactId="EBI-351590">
        <id>P31943</id>
        <label>HNRNPH1</label>
    </interactant>
    <organismsDiffer>false</organismsDiffer>
    <experiments>3</experiments>
</comment>
<comment type="interaction">
    <interactant intactId="EBI-750487">
        <id>Q8WW24</id>
    </interactant>
    <interactant intactId="EBI-486809">
        <id>P52272</id>
        <label>HNRNPM</label>
    </interactant>
    <organismsDiffer>false</organismsDiffer>
    <experiments>3</experiments>
</comment>
<comment type="interaction">
    <interactant intactId="EBI-750487">
        <id>Q8WW24</id>
    </interactant>
    <interactant intactId="EBI-740785">
        <id>P49639</id>
        <label>HOXA1</label>
    </interactant>
    <organismsDiffer>false</organismsDiffer>
    <experiments>3</experiments>
</comment>
<comment type="interaction">
    <interactant intactId="EBI-750487">
        <id>Q8WW24</id>
    </interactant>
    <interactant intactId="EBI-3893317">
        <id>P09067</id>
        <label>HOXB5</label>
    </interactant>
    <organismsDiffer>false</organismsDiffer>
    <experiments>3</experiments>
</comment>
<comment type="interaction">
    <interactant intactId="EBI-750487">
        <id>Q8WW24</id>
    </interactant>
    <interactant intactId="EBI-1752118">
        <id>P31273</id>
        <label>HOXC8</label>
    </interactant>
    <organismsDiffer>false</organismsDiffer>
    <experiments>3</experiments>
</comment>
<comment type="interaction">
    <interactant intactId="EBI-750487">
        <id>Q8WW24</id>
    </interactant>
    <interactant intactId="EBI-747204">
        <id>Q9UKT9</id>
        <label>IKZF3</label>
    </interactant>
    <organismsDiffer>false</organismsDiffer>
    <experiments>7</experiments>
</comment>
<comment type="interaction">
    <interactant intactId="EBI-750487">
        <id>Q8WW24</id>
    </interactant>
    <interactant intactId="EBI-6509505">
        <id>Q0VD86</id>
        <label>INCA1</label>
    </interactant>
    <organismsDiffer>false</organismsDiffer>
    <experiments>3</experiments>
</comment>
<comment type="interaction">
    <interactant intactId="EBI-750487">
        <id>Q8WW24</id>
    </interactant>
    <interactant intactId="EBI-10981970">
        <id>Q5T749</id>
        <label>KPRP</label>
    </interactant>
    <organismsDiffer>false</organismsDiffer>
    <experiments>3</experiments>
</comment>
<comment type="interaction">
    <interactant intactId="EBI-750487">
        <id>Q8WW24</id>
    </interactant>
    <interactant intactId="EBI-297888">
        <id>P05783</id>
        <label>KRT18</label>
    </interactant>
    <organismsDiffer>false</organismsDiffer>
    <experiments>3</experiments>
</comment>
<comment type="interaction">
    <interactant intactId="EBI-750487">
        <id>Q8WW24</id>
    </interactant>
    <interactant intactId="EBI-1047093">
        <id>O76011</id>
        <label>KRT34</label>
    </interactant>
    <organismsDiffer>false</organismsDiffer>
    <experiments>5</experiments>
</comment>
<comment type="interaction">
    <interactant intactId="EBI-750487">
        <id>Q8WW24</id>
    </interactant>
    <interactant intactId="EBI-1058674">
        <id>Q92764</id>
        <label>KRT35</label>
    </interactant>
    <organismsDiffer>false</organismsDiffer>
    <experiments>3</experiments>
</comment>
<comment type="interaction">
    <interactant intactId="EBI-750487">
        <id>Q8WW24</id>
    </interactant>
    <interactant intactId="EBI-2949715">
        <id>O95678</id>
        <label>KRT75</label>
    </interactant>
    <organismsDiffer>false</organismsDiffer>
    <experiments>3</experiments>
</comment>
<comment type="interaction">
    <interactant intactId="EBI-750487">
        <id>Q8WW24</id>
    </interactant>
    <interactant intactId="EBI-9996498">
        <id>O43790</id>
        <label>KRT86</label>
    </interactant>
    <organismsDiffer>false</organismsDiffer>
    <experiments>3</experiments>
</comment>
<comment type="interaction">
    <interactant intactId="EBI-750487">
        <id>Q8WW24</id>
    </interactant>
    <interactant intactId="EBI-1052037">
        <id>Q8IUC1</id>
        <label>KRTAP11-1</label>
    </interactant>
    <organismsDiffer>false</organismsDiffer>
    <experiments>3</experiments>
</comment>
<comment type="interaction">
    <interactant intactId="EBI-750487">
        <id>Q8WW24</id>
    </interactant>
    <interactant intactId="EBI-10241252">
        <id>Q3SY46</id>
        <label>KRTAP13-3</label>
    </interactant>
    <organismsDiffer>false</organismsDiffer>
    <experiments>5</experiments>
</comment>
<comment type="interaction">
    <interactant intactId="EBI-750487">
        <id>Q8WW24</id>
    </interactant>
    <interactant intactId="EBI-12811111">
        <id>Q8IUB9</id>
        <label>KRTAP19-1</label>
    </interactant>
    <organismsDiffer>false</organismsDiffer>
    <experiments>5</experiments>
</comment>
<comment type="interaction">
    <interactant intactId="EBI-750487">
        <id>Q8WW24</id>
    </interactant>
    <interactant intactId="EBI-12196745">
        <id>Q3LHN2</id>
        <label>KRTAP19-2</label>
    </interactant>
    <organismsDiffer>false</organismsDiffer>
    <experiments>3</experiments>
</comment>
<comment type="interaction">
    <interactant intactId="EBI-750487">
        <id>Q8WW24</id>
    </interactant>
    <interactant intactId="EBI-12805508">
        <id>Q3LI70</id>
        <label>KRTAP19-6</label>
    </interactant>
    <organismsDiffer>false</organismsDiffer>
    <experiments>3</experiments>
</comment>
<comment type="interaction">
    <interactant intactId="EBI-750487">
        <id>Q8WW24</id>
    </interactant>
    <interactant intactId="EBI-3957672">
        <id>Q6PEX3</id>
        <label>KRTAP26-1</label>
    </interactant>
    <organismsDiffer>false</organismsDiffer>
    <experiments>3</experiments>
</comment>
<comment type="interaction">
    <interactant intactId="EBI-750487">
        <id>Q8WW24</id>
    </interactant>
    <interactant intactId="EBI-11962084">
        <id>Q3LI66</id>
        <label>KRTAP6-2</label>
    </interactant>
    <organismsDiffer>false</organismsDiffer>
    <experiments>5</experiments>
</comment>
<comment type="interaction">
    <interactant intactId="EBI-750487">
        <id>Q8WW24</id>
    </interactant>
    <interactant intactId="EBI-22311199">
        <id>Q3LI67</id>
        <label>KRTAP6-3</label>
    </interactant>
    <organismsDiffer>false</organismsDiffer>
    <experiments>3</experiments>
</comment>
<comment type="interaction">
    <interactant intactId="EBI-750487">
        <id>Q8WW24</id>
    </interactant>
    <interactant intactId="EBI-18394498">
        <id>Q8IUC3</id>
        <label>KRTAP7-1</label>
    </interactant>
    <organismsDiffer>false</organismsDiffer>
    <experiments>3</experiments>
</comment>
<comment type="interaction">
    <interactant intactId="EBI-750487">
        <id>Q8WW24</id>
    </interactant>
    <interactant intactId="EBI-9088686">
        <id>Q14847-2</id>
        <label>LASP1</label>
    </interactant>
    <organismsDiffer>false</organismsDiffer>
    <experiments>3</experiments>
</comment>
<comment type="interaction">
    <interactant intactId="EBI-750487">
        <id>Q8WW24</id>
    </interactant>
    <interactant intactId="EBI-5774016">
        <id>Q9NZU5</id>
        <label>LMCD1</label>
    </interactant>
    <organismsDiffer>false</organismsDiffer>
    <experiments>3</experiments>
</comment>
<comment type="interaction">
    <interactant intactId="EBI-750487">
        <id>Q8WW24</id>
    </interactant>
    <interactant intactId="EBI-739832">
        <id>Q8TBB1</id>
        <label>LNX1</label>
    </interactant>
    <organismsDiffer>false</organismsDiffer>
    <experiments>3</experiments>
</comment>
<comment type="interaction">
    <interactant intactId="EBI-750487">
        <id>Q8WW24</id>
    </interactant>
    <interactant intactId="EBI-743122">
        <id>P43358</id>
        <label>MAGEA4</label>
    </interactant>
    <organismsDiffer>false</organismsDiffer>
    <experiments>7</experiments>
</comment>
<comment type="interaction">
    <interactant intactId="EBI-750487">
        <id>Q8WW24</id>
    </interactant>
    <interactant intactId="EBI-10194128">
        <id>Q1RN33</id>
        <label>MAGEA4</label>
    </interactant>
    <organismsDiffer>false</organismsDiffer>
    <experiments>3</experiments>
</comment>
<comment type="interaction">
    <interactant intactId="EBI-750487">
        <id>Q8WW24</id>
    </interactant>
    <interactant intactId="EBI-6427785">
        <id>Q02080</id>
        <label>MEF2B</label>
    </interactant>
    <organismsDiffer>false</organismsDiffer>
    <experiments>3</experiments>
</comment>
<comment type="interaction">
    <interactant intactId="EBI-750487">
        <id>Q8WW24</id>
    </interactant>
    <interactant intactId="EBI-2801965">
        <id>Q5JXC2</id>
        <label>MIIP</label>
    </interactant>
    <organismsDiffer>false</organismsDiffer>
    <experiments>3</experiments>
</comment>
<comment type="interaction">
    <interactant intactId="EBI-750487">
        <id>Q8WW24</id>
    </interactant>
    <interactant intactId="EBI-9675802">
        <id>Q6PF18</id>
        <label>MORN3</label>
    </interactant>
    <organismsDiffer>false</organismsDiffer>
    <experiments>3</experiments>
</comment>
<comment type="interaction">
    <interactant intactId="EBI-750487">
        <id>Q8WW24</id>
    </interactant>
    <interactant intactId="EBI-5662487">
        <id>Q8TDC0</id>
        <label>MYOZ3</label>
    </interactant>
    <organismsDiffer>false</organismsDiffer>
    <experiments>3</experiments>
</comment>
<comment type="interaction">
    <interactant intactId="EBI-750487">
        <id>Q8WW24</id>
    </interactant>
    <interactant intactId="EBI-18012223">
        <id>P60323-2</id>
        <label>NANOS3</label>
    </interactant>
    <organismsDiffer>false</organismsDiffer>
    <experiments>3</experiments>
</comment>
<comment type="interaction">
    <interactant intactId="EBI-750487">
        <id>Q8WW24</id>
    </interactant>
    <interactant intactId="EBI-10271199">
        <id>Q8NI38</id>
        <label>NFKBID</label>
    </interactant>
    <organismsDiffer>false</organismsDiffer>
    <experiments>3</experiments>
</comment>
<comment type="interaction">
    <interactant intactId="EBI-750487">
        <id>Q8WW24</id>
    </interactant>
    <interactant intactId="EBI-874629">
        <id>Q13285</id>
        <label>NR5A1</label>
    </interactant>
    <organismsDiffer>false</organismsDiffer>
    <experiments>3</experiments>
</comment>
<comment type="interaction">
    <interactant intactId="EBI-750487">
        <id>Q8WW24</id>
    </interactant>
    <interactant intactId="EBI-11956269">
        <id>Q92824-2</id>
        <label>PCSK5</label>
    </interactant>
    <organismsDiffer>false</organismsDiffer>
    <experiments>3</experiments>
</comment>
<comment type="interaction">
    <interactant intactId="EBI-750487">
        <id>Q8WW24</id>
    </interactant>
    <interactant intactId="EBI-2861403">
        <id>Q9UIL8</id>
        <label>PHF11</label>
    </interactant>
    <organismsDiffer>false</organismsDiffer>
    <experiments>3</experiments>
</comment>
<comment type="interaction">
    <interactant intactId="EBI-750487">
        <id>Q8WW24</id>
    </interactant>
    <interactant intactId="EBI-10987518">
        <id>Q99959-2</id>
        <label>PKP2</label>
    </interactant>
    <organismsDiffer>false</organismsDiffer>
    <experiments>3</experiments>
</comment>
<comment type="interaction">
    <interactant intactId="EBI-750487">
        <id>Q8WW24</id>
    </interactant>
    <interactant intactId="EBI-2876622">
        <id>Q9UPG8</id>
        <label>PLAGL2</label>
    </interactant>
    <organismsDiffer>false</organismsDiffer>
    <experiments>3</experiments>
</comment>
<comment type="interaction">
    <interactant intactId="EBI-750487">
        <id>Q8WW24</id>
    </interactant>
    <interactant intactId="EBI-10276663">
        <id>Q8WUT1</id>
        <label>POLDIP3</label>
    </interactant>
    <organismsDiffer>false</organismsDiffer>
    <experiments>3</experiments>
</comment>
<comment type="interaction">
    <interactant intactId="EBI-750487">
        <id>Q8WW24</id>
    </interactant>
    <interactant intactId="EBI-1105153">
        <id>Q96KQ4</id>
        <label>PPP1R13B</label>
    </interactant>
    <organismsDiffer>false</organismsDiffer>
    <experiments>3</experiments>
</comment>
<comment type="interaction">
    <interactant intactId="EBI-750487">
        <id>Q8WW24</id>
    </interactant>
    <interactant intactId="EBI-3957793">
        <id>Q9GZV8</id>
        <label>PRDM14</label>
    </interactant>
    <organismsDiffer>false</organismsDiffer>
    <experiments>6</experiments>
</comment>
<comment type="interaction">
    <interactant intactId="EBI-750487">
        <id>Q8WW24</id>
    </interactant>
    <interactant intactId="EBI-11320284">
        <id>Q9NQX0</id>
        <label>PRDM6</label>
    </interactant>
    <organismsDiffer>false</organismsDiffer>
    <experiments>3</experiments>
</comment>
<comment type="interaction">
    <interactant intactId="EBI-750487">
        <id>Q8WW24</id>
    </interactant>
    <interactant intactId="EBI-9027467">
        <id>O75360</id>
        <label>PROP1</label>
    </interactant>
    <organismsDiffer>false</organismsDiffer>
    <experiments>3</experiments>
</comment>
<comment type="interaction">
    <interactant intactId="EBI-750487">
        <id>Q8WW24</id>
    </interactant>
    <interactant intactId="EBI-359352">
        <id>P25786</id>
        <label>PSMA1</label>
    </interactant>
    <organismsDiffer>false</organismsDiffer>
    <experiments>3</experiments>
</comment>
<comment type="interaction">
    <interactant intactId="EBI-750487">
        <id>Q8WW24</id>
    </interactant>
    <interactant intactId="EBI-2860297">
        <id>Q03431</id>
        <label>PTH1R</label>
    </interactant>
    <organismsDiffer>false</organismsDiffer>
    <experiments>3</experiments>
</comment>
<comment type="interaction">
    <interactant intactId="EBI-750487">
        <id>Q8WW24</id>
    </interactant>
    <interactant intactId="EBI-744023">
        <id>Q9BTL3</id>
        <label>RAMAC</label>
    </interactant>
    <organismsDiffer>false</organismsDiffer>
    <experiments>3</experiments>
</comment>
<comment type="interaction">
    <interactant intactId="EBI-750487">
        <id>Q8WW24</id>
    </interactant>
    <interactant intactId="EBI-413374">
        <id>P10276</id>
        <label>RARA</label>
    </interactant>
    <organismsDiffer>false</organismsDiffer>
    <experiments>4</experiments>
</comment>
<comment type="interaction">
    <interactant intactId="EBI-750487">
        <id>Q8WW24</id>
    </interactant>
    <interactant intactId="EBI-10197061">
        <id>P10276-2</id>
        <label>RARA</label>
    </interactant>
    <organismsDiffer>false</organismsDiffer>
    <experiments>3</experiments>
</comment>
<comment type="interaction">
    <interactant intactId="EBI-750487">
        <id>Q8WW24</id>
    </interactant>
    <interactant intactId="EBI-473821">
        <id>Q5RL73</id>
        <label>RBM48</label>
    </interactant>
    <organismsDiffer>false</organismsDiffer>
    <experiments>3</experiments>
</comment>
<comment type="interaction">
    <interactant intactId="EBI-750487">
        <id>Q8WW24</id>
    </interactant>
    <interactant intactId="EBI-10253121">
        <id>Q6P9E2</id>
        <label>RECK</label>
    </interactant>
    <organismsDiffer>false</organismsDiffer>
    <experiments>6</experiments>
</comment>
<comment type="interaction">
    <interactant intactId="EBI-750487">
        <id>Q8WW24</id>
    </interactant>
    <interactant intactId="EBI-746118">
        <id>Q8HWS3</id>
        <label>RFX6</label>
    </interactant>
    <organismsDiffer>false</organismsDiffer>
    <experiments>3</experiments>
</comment>
<comment type="interaction">
    <interactant intactId="EBI-750487">
        <id>Q8WW24</id>
    </interactant>
    <interactant intactId="EBI-6257312">
        <id>Q9BVN2</id>
        <label>RUSC1</label>
    </interactant>
    <organismsDiffer>false</organismsDiffer>
    <experiments>5</experiments>
</comment>
<comment type="interaction">
    <interactant intactId="EBI-750487">
        <id>Q8WW24</id>
    </interactant>
    <interactant intactId="EBI-12000762">
        <id>Q7Z5V6-2</id>
        <label>SAXO4</label>
    </interactant>
    <organismsDiffer>false</organismsDiffer>
    <experiments>6</experiments>
</comment>
<comment type="interaction">
    <interactant intactId="EBI-750487">
        <id>Q8WW24</id>
    </interactant>
    <interactant intactId="EBI-14276801">
        <id>Q14524-3</id>
        <label>SCN5A</label>
    </interactant>
    <organismsDiffer>false</organismsDiffer>
    <experiments>3</experiments>
</comment>
<comment type="interaction">
    <interactant intactId="EBI-750487">
        <id>Q8WW24</id>
    </interactant>
    <interactant intactId="EBI-356254">
        <id>P12236</id>
        <label>SLC25A6</label>
    </interactant>
    <organismsDiffer>false</organismsDiffer>
    <experiments>3</experiments>
</comment>
<comment type="interaction">
    <interactant intactId="EBI-750487">
        <id>Q8WW24</id>
    </interactant>
    <interactant intactId="EBI-347161">
        <id>P84022</id>
        <label>SMAD3</label>
    </interactant>
    <organismsDiffer>false</organismsDiffer>
    <experiments>3</experiments>
</comment>
<comment type="interaction">
    <interactant intactId="EBI-750487">
        <id>Q8WW24</id>
    </interactant>
    <interactant intactId="EBI-3942425">
        <id>Q8WXH5</id>
        <label>SOCS4</label>
    </interactant>
    <organismsDiffer>false</organismsDiffer>
    <experiments>3</experiments>
</comment>
<comment type="interaction">
    <interactant intactId="EBI-750487">
        <id>Q8WW24</id>
    </interactant>
    <interactant intactId="EBI-8635958">
        <id>Q6RVD6</id>
        <label>SPATA8</label>
    </interactant>
    <organismsDiffer>false</organismsDiffer>
    <experiments>3</experiments>
</comment>
<comment type="interaction">
    <interactant intactId="EBI-750487">
        <id>Q8WW24</id>
    </interactant>
    <interactant intactId="EBI-11995806">
        <id>Q9H0A9-2</id>
        <label>SPATC1L</label>
    </interactant>
    <organismsDiffer>false</organismsDiffer>
    <experiments>3</experiments>
</comment>
<comment type="interaction">
    <interactant intactId="EBI-750487">
        <id>Q8WW24</id>
    </interactant>
    <interactant intactId="EBI-742688">
        <id>Q9NZD8</id>
        <label>SPG21</label>
    </interactant>
    <organismsDiffer>false</organismsDiffer>
    <experiments>3</experiments>
</comment>
<comment type="interaction">
    <interactant intactId="EBI-750487">
        <id>Q8WW24</id>
    </interactant>
    <interactant intactId="EBI-10269322">
        <id>Q8NCR6</id>
        <label>SPMIP6</label>
    </interactant>
    <organismsDiffer>false</organismsDiffer>
    <experiments>3</experiments>
</comment>
<comment type="interaction">
    <interactant intactId="EBI-750487">
        <id>Q8WW24</id>
    </interactant>
    <interactant intactId="EBI-349968">
        <id>O43463</id>
        <label>SUV39H1</label>
    </interactant>
    <organismsDiffer>false</organismsDiffer>
    <experiments>3</experiments>
</comment>
<comment type="interaction">
    <interactant intactId="EBI-750487">
        <id>Q8WW24</id>
    </interactant>
    <interactant intactId="EBI-742268">
        <id>O75478</id>
        <label>TADA2A</label>
    </interactant>
    <organismsDiffer>false</organismsDiffer>
    <experiments>3</experiments>
</comment>
<comment type="interaction">
    <interactant intactId="EBI-750487">
        <id>Q8WW24</id>
    </interactant>
    <interactant intactId="EBI-10180409">
        <id>Q969V4</id>
        <label>TEKT1</label>
    </interactant>
    <organismsDiffer>false</organismsDiffer>
    <experiments>3</experiments>
</comment>
<comment type="interaction">
    <interactant intactId="EBI-750487">
        <id>Q8WW24</id>
    </interactant>
    <interactant intactId="EBI-2514218">
        <id>Q01664</id>
        <label>TFAP4</label>
    </interactant>
    <organismsDiffer>false</organismsDiffer>
    <experiments>3</experiments>
</comment>
<comment type="interaction">
    <interactant intactId="EBI-750487">
        <id>Q8WW24</id>
    </interactant>
    <interactant intactId="EBI-12815137">
        <id>Q96NM4-3</id>
        <label>TOX2</label>
    </interactant>
    <organismsDiffer>false</organismsDiffer>
    <experiments>3</experiments>
</comment>
<comment type="interaction">
    <interactant intactId="EBI-750487">
        <id>Q8WW24</id>
    </interactant>
    <interactant intactId="EBI-492476">
        <id>Q96RU7</id>
        <label>TRIB3</label>
    </interactant>
    <organismsDiffer>false</organismsDiffer>
    <experiments>5</experiments>
</comment>
<comment type="interaction">
    <interactant intactId="EBI-750487">
        <id>Q8WW24</id>
    </interactant>
    <interactant intactId="EBI-742327">
        <id>Q15654</id>
        <label>TRIP6</label>
    </interactant>
    <organismsDiffer>false</organismsDiffer>
    <experiments>4</experiments>
</comment>
<comment type="interaction">
    <interactant intactId="EBI-750487">
        <id>Q8WW24</id>
    </interactant>
    <interactant intactId="EBI-8652667">
        <id>O14817</id>
        <label>TSPAN4</label>
    </interactant>
    <organismsDiffer>false</organismsDiffer>
    <experiments>3</experiments>
</comment>
<comment type="interaction">
    <interactant intactId="EBI-750487">
        <id>Q8WW24</id>
    </interactant>
    <interactant intactId="EBI-7353612">
        <id>P57075-2</id>
        <label>UBASH3A</label>
    </interactant>
    <organismsDiffer>false</organismsDiffer>
    <experiments>3</experiments>
</comment>
<comment type="interaction">
    <interactant intactId="EBI-750487">
        <id>Q8WW24</id>
    </interactant>
    <interactant intactId="EBI-743272">
        <id>O75604</id>
        <label>USP2</label>
    </interactant>
    <organismsDiffer>false</organismsDiffer>
    <experiments>3</experiments>
</comment>
<comment type="interaction">
    <interactant intactId="EBI-750487">
        <id>Q8WW24</id>
    </interactant>
    <interactant intactId="EBI-11983165">
        <id>Q99990</id>
        <label>VGLL1</label>
    </interactant>
    <organismsDiffer>false</organismsDiffer>
    <experiments>3</experiments>
</comment>
<comment type="interaction">
    <interactant intactId="EBI-750487">
        <id>Q8WW24</id>
    </interactant>
    <interactant intactId="EBI-11419867">
        <id>Q8TF47</id>
        <label>ZFP90</label>
    </interactant>
    <organismsDiffer>false</organismsDiffer>
    <experiments>3</experiments>
</comment>
<comment type="interaction">
    <interactant intactId="EBI-750487">
        <id>Q8WW24</id>
    </interactant>
    <interactant intactId="EBI-11962760">
        <id>Q9NZV7</id>
        <label>ZIM2</label>
    </interactant>
    <organismsDiffer>false</organismsDiffer>
    <experiments>3</experiments>
</comment>
<comment type="interaction">
    <interactant intactId="EBI-750487">
        <id>Q8WW24</id>
    </interactant>
    <interactant intactId="EBI-12030590">
        <id>Q9H0C1</id>
        <label>ZMYND12</label>
    </interactant>
    <organismsDiffer>false</organismsDiffer>
    <experiments>3</experiments>
</comment>
<comment type="interaction">
    <interactant intactId="EBI-750487">
        <id>Q8WW24</id>
    </interactant>
    <interactant intactId="EBI-717634">
        <id>P17024</id>
        <label>ZNF20</label>
    </interactant>
    <organismsDiffer>false</organismsDiffer>
    <experiments>3</experiments>
</comment>
<comment type="interaction">
    <interactant intactId="EBI-750487">
        <id>Q8WW24</id>
    </interactant>
    <interactant intactId="EBI-740727">
        <id>Q8TAU3</id>
        <label>ZNF417</label>
    </interactant>
    <organismsDiffer>false</organismsDiffer>
    <experiments>3</experiments>
</comment>
<comment type="interaction">
    <interactant intactId="EBI-750487">
        <id>Q8WW24</id>
    </interactant>
    <interactant intactId="EBI-743265">
        <id>Q9BUY5</id>
        <label>ZNF426</label>
    </interactant>
    <organismsDiffer>false</organismsDiffer>
    <experiments>3</experiments>
</comment>
<comment type="interaction">
    <interactant intactId="EBI-750487">
        <id>Q8WW24</id>
    </interactant>
    <interactant intactId="EBI-17269964">
        <id>Q6S9Z5</id>
        <label>ZNF474</label>
    </interactant>
    <organismsDiffer>false</organismsDiffer>
    <experiments>3</experiments>
</comment>
<comment type="interaction">
    <interactant intactId="EBI-750487">
        <id>Q8WW24</id>
    </interactant>
    <interactant intactId="EBI-2555731">
        <id>Q9H707</id>
        <label>ZNF552</label>
    </interactant>
    <organismsDiffer>false</organismsDiffer>
    <experiments>3</experiments>
</comment>
<comment type="interaction">
    <interactant intactId="EBI-750487">
        <id>Q8WW24</id>
    </interactant>
    <interactant intactId="EBI-745520">
        <id>Q9P0T4</id>
        <label>ZNF581</label>
    </interactant>
    <organismsDiffer>false</organismsDiffer>
    <experiments>3</experiments>
</comment>
<comment type="interaction">
    <interactant intactId="EBI-750487">
        <id>Q8WW24</id>
    </interactant>
    <interactant intactId="EBI-625509">
        <id>Q8N720</id>
        <label>ZNF655</label>
    </interactant>
    <organismsDiffer>false</organismsDiffer>
    <experiments>3</experiments>
</comment>
<comment type="interaction">
    <interactant intactId="EBI-750487">
        <id>Q8WW24</id>
    </interactant>
    <interactant intactId="EBI-4395732">
        <id>P0C7X2</id>
        <label>ZNF688</label>
    </interactant>
    <organismsDiffer>false</organismsDiffer>
    <experiments>3</experiments>
</comment>
<comment type="interaction">
    <interactant intactId="EBI-750487">
        <id>Q8WW24</id>
    </interactant>
    <interactant intactId="EBI-25492395">
        <id>PRO_0000449633</id>
        <label>rep</label>
        <dbReference type="UniProtKB" id="P0DTD1"/>
    </interactant>
    <organismsDiffer>true</organismsDiffer>
    <experiments>3</experiments>
</comment>
<comment type="subcellular location">
    <subcellularLocation>
        <location evidence="8">Cytoplasm</location>
        <location evidence="8">Cytoskeleton</location>
        <location evidence="8">Cilium axoneme</location>
    </subcellularLocation>
    <subcellularLocation>
        <location evidence="1">Cytoplasm</location>
        <location evidence="1">Cytoskeleton</location>
        <location evidence="1">Flagellum axoneme</location>
    </subcellularLocation>
    <text evidence="1">Found in the abaxial (convex) surface of outer dense fibers in sperm flagella.</text>
</comment>
<comment type="tissue specificity">
    <text evidence="7 8">Strongly expressed in spermatozoa. Also detected at low levels in pancreas. Expressed in airway epithelial cells (PubMed:36191189).</text>
</comment>
<comment type="PTM">
    <text evidence="1">Ubiquitinated, leading to its degradation. Deubiquitinated by USP16, promoting its stability.</text>
</comment>
<comment type="similarity">
    <text evidence="9">Belongs to the tektin family.</text>
</comment>
<name>TEKT4_HUMAN</name>
<protein>
    <recommendedName>
        <fullName>Tektin-4</fullName>
    </recommendedName>
</protein>
<reference key="1">
    <citation type="journal article" date="2005" name="Nature">
        <title>Generation and annotation of the DNA sequences of human chromosomes 2 and 4.</title>
        <authorList>
            <person name="Hillier L.W."/>
            <person name="Graves T.A."/>
            <person name="Fulton R.S."/>
            <person name="Fulton L.A."/>
            <person name="Pepin K.H."/>
            <person name="Minx P."/>
            <person name="Wagner-McPherson C."/>
            <person name="Layman D."/>
            <person name="Wylie K."/>
            <person name="Sekhon M."/>
            <person name="Becker M.C."/>
            <person name="Fewell G.A."/>
            <person name="Delehaunty K.D."/>
            <person name="Miner T.L."/>
            <person name="Nash W.E."/>
            <person name="Kremitzki C."/>
            <person name="Oddy L."/>
            <person name="Du H."/>
            <person name="Sun H."/>
            <person name="Bradshaw-Cordum H."/>
            <person name="Ali J."/>
            <person name="Carter J."/>
            <person name="Cordes M."/>
            <person name="Harris A."/>
            <person name="Isak A."/>
            <person name="van Brunt A."/>
            <person name="Nguyen C."/>
            <person name="Du F."/>
            <person name="Courtney L."/>
            <person name="Kalicki J."/>
            <person name="Ozersky P."/>
            <person name="Abbott S."/>
            <person name="Armstrong J."/>
            <person name="Belter E.A."/>
            <person name="Caruso L."/>
            <person name="Cedroni M."/>
            <person name="Cotton M."/>
            <person name="Davidson T."/>
            <person name="Desai A."/>
            <person name="Elliott G."/>
            <person name="Erb T."/>
            <person name="Fronick C."/>
            <person name="Gaige T."/>
            <person name="Haakenson W."/>
            <person name="Haglund K."/>
            <person name="Holmes A."/>
            <person name="Harkins R."/>
            <person name="Kim K."/>
            <person name="Kruchowski S.S."/>
            <person name="Strong C.M."/>
            <person name="Grewal N."/>
            <person name="Goyea E."/>
            <person name="Hou S."/>
            <person name="Levy A."/>
            <person name="Martinka S."/>
            <person name="Mead K."/>
            <person name="McLellan M.D."/>
            <person name="Meyer R."/>
            <person name="Randall-Maher J."/>
            <person name="Tomlinson C."/>
            <person name="Dauphin-Kohlberg S."/>
            <person name="Kozlowicz-Reilly A."/>
            <person name="Shah N."/>
            <person name="Swearengen-Shahid S."/>
            <person name="Snider J."/>
            <person name="Strong J.T."/>
            <person name="Thompson J."/>
            <person name="Yoakum M."/>
            <person name="Leonard S."/>
            <person name="Pearman C."/>
            <person name="Trani L."/>
            <person name="Radionenko M."/>
            <person name="Waligorski J.E."/>
            <person name="Wang C."/>
            <person name="Rock S.M."/>
            <person name="Tin-Wollam A.-M."/>
            <person name="Maupin R."/>
            <person name="Latreille P."/>
            <person name="Wendl M.C."/>
            <person name="Yang S.-P."/>
            <person name="Pohl C."/>
            <person name="Wallis J.W."/>
            <person name="Spieth J."/>
            <person name="Bieri T.A."/>
            <person name="Berkowicz N."/>
            <person name="Nelson J.O."/>
            <person name="Osborne J."/>
            <person name="Ding L."/>
            <person name="Meyer R."/>
            <person name="Sabo A."/>
            <person name="Shotland Y."/>
            <person name="Sinha P."/>
            <person name="Wohldmann P.E."/>
            <person name="Cook L.L."/>
            <person name="Hickenbotham M.T."/>
            <person name="Eldred J."/>
            <person name="Williams D."/>
            <person name="Jones T.A."/>
            <person name="She X."/>
            <person name="Ciccarelli F.D."/>
            <person name="Izaurralde E."/>
            <person name="Taylor J."/>
            <person name="Schmutz J."/>
            <person name="Myers R.M."/>
            <person name="Cox D.R."/>
            <person name="Huang X."/>
            <person name="McPherson J.D."/>
            <person name="Mardis E.R."/>
            <person name="Clifton S.W."/>
            <person name="Warren W.C."/>
            <person name="Chinwalla A.T."/>
            <person name="Eddy S.R."/>
            <person name="Marra M.A."/>
            <person name="Ovcharenko I."/>
            <person name="Furey T.S."/>
            <person name="Miller W."/>
            <person name="Eichler E.E."/>
            <person name="Bork P."/>
            <person name="Suyama M."/>
            <person name="Torrents D."/>
            <person name="Waterston R.H."/>
            <person name="Wilson R.K."/>
        </authorList>
    </citation>
    <scope>NUCLEOTIDE SEQUENCE [LARGE SCALE GENOMIC DNA]</scope>
</reference>
<reference key="2">
    <citation type="journal article" date="2004" name="Genome Res.">
        <title>The status, quality, and expansion of the NIH full-length cDNA project: the Mammalian Gene Collection (MGC).</title>
        <authorList>
            <consortium name="The MGC Project Team"/>
        </authorList>
    </citation>
    <scope>NUCLEOTIDE SEQUENCE [LARGE SCALE MRNA]</scope>
    <source>
        <tissue>Testis</tissue>
    </source>
</reference>
<reference key="3">
    <citation type="journal article" date="2006" name="Science">
        <title>The consensus coding sequences of human breast and colorectal cancers.</title>
        <authorList>
            <person name="Sjoeblom T."/>
            <person name="Jones S."/>
            <person name="Wood L.D."/>
            <person name="Parsons D.W."/>
            <person name="Lin J."/>
            <person name="Barber T.D."/>
            <person name="Mandelker D."/>
            <person name="Leary R.J."/>
            <person name="Ptak J."/>
            <person name="Silliman N."/>
            <person name="Szabo S."/>
            <person name="Buckhaults P."/>
            <person name="Farrell C."/>
            <person name="Meeh P."/>
            <person name="Markowitz S.D."/>
            <person name="Willis J."/>
            <person name="Dawson D."/>
            <person name="Willson J.K.V."/>
            <person name="Gazdar A.F."/>
            <person name="Hartigan J."/>
            <person name="Wu L."/>
            <person name="Liu C."/>
            <person name="Parmigiani G."/>
            <person name="Park B.H."/>
            <person name="Bachman K.E."/>
            <person name="Papadopoulos N."/>
            <person name="Vogelstein B."/>
            <person name="Kinzler K.W."/>
            <person name="Velculescu V.E."/>
        </authorList>
    </citation>
    <scope>VARIANT [LARGE SCALE ANALYSIS] SER-272</scope>
</reference>
<reference key="4">
    <citation type="journal article" date="2007" name="FASEB J.">
        <title>Absence of tektin 4 causes asthenozoospermia and subfertility in male mice.</title>
        <authorList>
            <person name="Roy A."/>
            <person name="Lin Y.N."/>
            <person name="Agno J.E."/>
            <person name="DeMayo F.J."/>
            <person name="Matzuk M.M."/>
        </authorList>
    </citation>
    <scope>TISSUE SPECIFICITY</scope>
</reference>
<reference evidence="11" key="5">
    <citation type="journal article" date="2022" name="Proc. Natl. Acad. Sci. U.S.A.">
        <title>SPACA9 is a lumenal protein of human ciliary singlet and doublet microtubules.</title>
        <authorList>
            <person name="Gui M."/>
            <person name="Croft J.T."/>
            <person name="Zabeo D."/>
            <person name="Acharya V."/>
            <person name="Kollman J.M."/>
            <person name="Burgoyne T."/>
            <person name="Hoog J.L."/>
            <person name="Brown A."/>
        </authorList>
    </citation>
    <scope>STRUCTURE BY ELECTRON MICROSCOPY (3.60 ANGSTROMS)</scope>
    <scope>FUNCTION</scope>
    <scope>SUBCELLULAR LOCATION</scope>
    <scope>TISSUE SPECIFICITY</scope>
</reference>
<organism>
    <name type="scientific">Homo sapiens</name>
    <name type="common">Human</name>
    <dbReference type="NCBI Taxonomy" id="9606"/>
    <lineage>
        <taxon>Eukaryota</taxon>
        <taxon>Metazoa</taxon>
        <taxon>Chordata</taxon>
        <taxon>Craniata</taxon>
        <taxon>Vertebrata</taxon>
        <taxon>Euteleostomi</taxon>
        <taxon>Mammalia</taxon>
        <taxon>Eutheria</taxon>
        <taxon>Euarchontoglires</taxon>
        <taxon>Primates</taxon>
        <taxon>Haplorrhini</taxon>
        <taxon>Catarrhini</taxon>
        <taxon>Hominidae</taxon>
        <taxon>Homo</taxon>
    </lineage>
</organism>
<evidence type="ECO:0000250" key="1">
    <source>
        <dbReference type="UniProtKB" id="Q149S1"/>
    </source>
</evidence>
<evidence type="ECO:0000250" key="2">
    <source>
        <dbReference type="UniProtKB" id="Q2TA38"/>
    </source>
</evidence>
<evidence type="ECO:0000250" key="3">
    <source>
        <dbReference type="UniProtKB" id="Q6X6Z7"/>
    </source>
</evidence>
<evidence type="ECO:0000255" key="4"/>
<evidence type="ECO:0000256" key="5">
    <source>
        <dbReference type="SAM" id="MobiDB-lite"/>
    </source>
</evidence>
<evidence type="ECO:0000269" key="6">
    <source>
    </source>
</evidence>
<evidence type="ECO:0000269" key="7">
    <source>
    </source>
</evidence>
<evidence type="ECO:0000269" key="8">
    <source>
    </source>
</evidence>
<evidence type="ECO:0000305" key="9"/>
<evidence type="ECO:0000312" key="10">
    <source>
        <dbReference type="HGNC" id="HGNC:31012"/>
    </source>
</evidence>
<evidence type="ECO:0007744" key="11">
    <source>
        <dbReference type="PDB" id="7UNG"/>
    </source>
</evidence>
<proteinExistence type="evidence at protein level"/>